<keyword id="KW-0007">Acetylation</keyword>
<keyword id="KW-0175">Coiled coil</keyword>
<keyword id="KW-0256">Endoplasmic reticulum</keyword>
<keyword id="KW-0275">Fatty acid biosynthesis</keyword>
<keyword id="KW-0276">Fatty acid metabolism</keyword>
<keyword id="KW-0444">Lipid biosynthesis</keyword>
<keyword id="KW-0443">Lipid metabolism</keyword>
<keyword id="KW-0456">Lyase</keyword>
<keyword id="KW-0472">Membrane</keyword>
<keyword id="KW-0597">Phosphoprotein</keyword>
<keyword id="KW-1185">Reference proteome</keyword>
<keyword id="KW-0812">Transmembrane</keyword>
<keyword id="KW-1133">Transmembrane helix</keyword>
<reference key="1">
    <citation type="journal article" date="2005" name="Science">
        <title>The transcriptional landscape of the mammalian genome.</title>
        <authorList>
            <person name="Carninci P."/>
            <person name="Kasukawa T."/>
            <person name="Katayama S."/>
            <person name="Gough J."/>
            <person name="Frith M.C."/>
            <person name="Maeda N."/>
            <person name="Oyama R."/>
            <person name="Ravasi T."/>
            <person name="Lenhard B."/>
            <person name="Wells C."/>
            <person name="Kodzius R."/>
            <person name="Shimokawa K."/>
            <person name="Bajic V.B."/>
            <person name="Brenner S.E."/>
            <person name="Batalov S."/>
            <person name="Forrest A.R."/>
            <person name="Zavolan M."/>
            <person name="Davis M.J."/>
            <person name="Wilming L.G."/>
            <person name="Aidinis V."/>
            <person name="Allen J.E."/>
            <person name="Ambesi-Impiombato A."/>
            <person name="Apweiler R."/>
            <person name="Aturaliya R.N."/>
            <person name="Bailey T.L."/>
            <person name="Bansal M."/>
            <person name="Baxter L."/>
            <person name="Beisel K.W."/>
            <person name="Bersano T."/>
            <person name="Bono H."/>
            <person name="Chalk A.M."/>
            <person name="Chiu K.P."/>
            <person name="Choudhary V."/>
            <person name="Christoffels A."/>
            <person name="Clutterbuck D.R."/>
            <person name="Crowe M.L."/>
            <person name="Dalla E."/>
            <person name="Dalrymple B.P."/>
            <person name="de Bono B."/>
            <person name="Della Gatta G."/>
            <person name="di Bernardo D."/>
            <person name="Down T."/>
            <person name="Engstrom P."/>
            <person name="Fagiolini M."/>
            <person name="Faulkner G."/>
            <person name="Fletcher C.F."/>
            <person name="Fukushima T."/>
            <person name="Furuno M."/>
            <person name="Futaki S."/>
            <person name="Gariboldi M."/>
            <person name="Georgii-Hemming P."/>
            <person name="Gingeras T.R."/>
            <person name="Gojobori T."/>
            <person name="Green R.E."/>
            <person name="Gustincich S."/>
            <person name="Harbers M."/>
            <person name="Hayashi Y."/>
            <person name="Hensch T.K."/>
            <person name="Hirokawa N."/>
            <person name="Hill D."/>
            <person name="Huminiecki L."/>
            <person name="Iacono M."/>
            <person name="Ikeo K."/>
            <person name="Iwama A."/>
            <person name="Ishikawa T."/>
            <person name="Jakt M."/>
            <person name="Kanapin A."/>
            <person name="Katoh M."/>
            <person name="Kawasawa Y."/>
            <person name="Kelso J."/>
            <person name="Kitamura H."/>
            <person name="Kitano H."/>
            <person name="Kollias G."/>
            <person name="Krishnan S.P."/>
            <person name="Kruger A."/>
            <person name="Kummerfeld S.K."/>
            <person name="Kurochkin I.V."/>
            <person name="Lareau L.F."/>
            <person name="Lazarevic D."/>
            <person name="Lipovich L."/>
            <person name="Liu J."/>
            <person name="Liuni S."/>
            <person name="McWilliam S."/>
            <person name="Madan Babu M."/>
            <person name="Madera M."/>
            <person name="Marchionni L."/>
            <person name="Matsuda H."/>
            <person name="Matsuzawa S."/>
            <person name="Miki H."/>
            <person name="Mignone F."/>
            <person name="Miyake S."/>
            <person name="Morris K."/>
            <person name="Mottagui-Tabar S."/>
            <person name="Mulder N."/>
            <person name="Nakano N."/>
            <person name="Nakauchi H."/>
            <person name="Ng P."/>
            <person name="Nilsson R."/>
            <person name="Nishiguchi S."/>
            <person name="Nishikawa S."/>
            <person name="Nori F."/>
            <person name="Ohara O."/>
            <person name="Okazaki Y."/>
            <person name="Orlando V."/>
            <person name="Pang K.C."/>
            <person name="Pavan W.J."/>
            <person name="Pavesi G."/>
            <person name="Pesole G."/>
            <person name="Petrovsky N."/>
            <person name="Piazza S."/>
            <person name="Reed J."/>
            <person name="Reid J.F."/>
            <person name="Ring B.Z."/>
            <person name="Ringwald M."/>
            <person name="Rost B."/>
            <person name="Ruan Y."/>
            <person name="Salzberg S.L."/>
            <person name="Sandelin A."/>
            <person name="Schneider C."/>
            <person name="Schoenbach C."/>
            <person name="Sekiguchi K."/>
            <person name="Semple C.A."/>
            <person name="Seno S."/>
            <person name="Sessa L."/>
            <person name="Sheng Y."/>
            <person name="Shibata Y."/>
            <person name="Shimada H."/>
            <person name="Shimada K."/>
            <person name="Silva D."/>
            <person name="Sinclair B."/>
            <person name="Sperling S."/>
            <person name="Stupka E."/>
            <person name="Sugiura K."/>
            <person name="Sultana R."/>
            <person name="Takenaka Y."/>
            <person name="Taki K."/>
            <person name="Tammoja K."/>
            <person name="Tan S.L."/>
            <person name="Tang S."/>
            <person name="Taylor M.S."/>
            <person name="Tegner J."/>
            <person name="Teichmann S.A."/>
            <person name="Ueda H.R."/>
            <person name="van Nimwegen E."/>
            <person name="Verardo R."/>
            <person name="Wei C.L."/>
            <person name="Yagi K."/>
            <person name="Yamanishi H."/>
            <person name="Zabarovsky E."/>
            <person name="Zhu S."/>
            <person name="Zimmer A."/>
            <person name="Hide W."/>
            <person name="Bult C."/>
            <person name="Grimmond S.M."/>
            <person name="Teasdale R.D."/>
            <person name="Liu E.T."/>
            <person name="Brusic V."/>
            <person name="Quackenbush J."/>
            <person name="Wahlestedt C."/>
            <person name="Mattick J.S."/>
            <person name="Hume D.A."/>
            <person name="Kai C."/>
            <person name="Sasaki D."/>
            <person name="Tomaru Y."/>
            <person name="Fukuda S."/>
            <person name="Kanamori-Katayama M."/>
            <person name="Suzuki M."/>
            <person name="Aoki J."/>
            <person name="Arakawa T."/>
            <person name="Iida J."/>
            <person name="Imamura K."/>
            <person name="Itoh M."/>
            <person name="Kato T."/>
            <person name="Kawaji H."/>
            <person name="Kawagashira N."/>
            <person name="Kawashima T."/>
            <person name="Kojima M."/>
            <person name="Kondo S."/>
            <person name="Konno H."/>
            <person name="Nakano K."/>
            <person name="Ninomiya N."/>
            <person name="Nishio T."/>
            <person name="Okada M."/>
            <person name="Plessy C."/>
            <person name="Shibata K."/>
            <person name="Shiraki T."/>
            <person name="Suzuki S."/>
            <person name="Tagami M."/>
            <person name="Waki K."/>
            <person name="Watahiki A."/>
            <person name="Okamura-Oho Y."/>
            <person name="Suzuki H."/>
            <person name="Kawai J."/>
            <person name="Hayashizaki Y."/>
        </authorList>
    </citation>
    <scope>NUCLEOTIDE SEQUENCE [LARGE SCALE MRNA]</scope>
    <source>
        <strain>C57BL/6J</strain>
        <tissue>Heart</tissue>
        <tissue>Pancreas</tissue>
        <tissue>Spinal ganglion</tissue>
    </source>
</reference>
<reference key="2">
    <citation type="journal article" date="2004" name="Genome Res.">
        <title>The status, quality, and expansion of the NIH full-length cDNA project: the Mammalian Gene Collection (MGC).</title>
        <authorList>
            <consortium name="The MGC Project Team"/>
        </authorList>
    </citation>
    <scope>NUCLEOTIDE SEQUENCE [LARGE SCALE MRNA]</scope>
    <source>
        <strain>C57BL/6J</strain>
        <strain>FVB/N</strain>
        <tissue>Brain</tissue>
    </source>
</reference>
<reference key="3">
    <citation type="journal article" date="2000" name="J. Biol. Chem.">
        <title>B-ind1, a novel mediator of Rac1 signaling cloned from sodium butyrate-treated fibroblasts.</title>
        <authorList>
            <person name="Courilleau D."/>
            <person name="Chastre E."/>
            <person name="Sabbah M."/>
            <person name="Redeuilh G."/>
            <person name="Atfi A."/>
            <person name="Mester J."/>
        </authorList>
    </citation>
    <scope>NUCLEOTIDE SEQUENCE [MRNA] OF 1-190</scope>
</reference>
<reference key="4">
    <citation type="journal article" date="2004" name="Mol. Cell. Proteomics">
        <title>Phosphoproteomic analysis of the developing mouse brain.</title>
        <authorList>
            <person name="Ballif B.A."/>
            <person name="Villen J."/>
            <person name="Beausoleil S.A."/>
            <person name="Schwartz D."/>
            <person name="Gygi S.P."/>
        </authorList>
    </citation>
    <scope>PHOSPHORYLATION [LARGE SCALE ANALYSIS] AT SER-114</scope>
    <scope>IDENTIFICATION BY MASS SPECTROMETRY [LARGE SCALE ANALYSIS]</scope>
    <source>
        <tissue>Embryonic brain</tissue>
    </source>
</reference>
<reference key="5">
    <citation type="journal article" date="2007" name="Mol. Cell. Proteomics">
        <title>Qualitative and quantitative analyses of protein phosphorylation in naive and stimulated mouse synaptosomal preparations.</title>
        <authorList>
            <person name="Munton R.P."/>
            <person name="Tweedie-Cullen R."/>
            <person name="Livingstone-Zatchej M."/>
            <person name="Weinandy F."/>
            <person name="Waidelich M."/>
            <person name="Longo D."/>
            <person name="Gehrig P."/>
            <person name="Potthast F."/>
            <person name="Rutishauser D."/>
            <person name="Gerrits B."/>
            <person name="Panse C."/>
            <person name="Schlapbach R."/>
            <person name="Mansuy I.M."/>
        </authorList>
    </citation>
    <scope>IDENTIFICATION BY MASS SPECTROMETRY [LARGE SCALE ANALYSIS]</scope>
    <source>
        <tissue>Brain cortex</tissue>
    </source>
</reference>
<reference key="6">
    <citation type="journal article" date="2007" name="Mol. Cell. Proteomics">
        <title>Mitochondrial phosphoproteome revealed by an improved IMAC method and MS/MS/MS.</title>
        <authorList>
            <person name="Lee J."/>
            <person name="Xu Y."/>
            <person name="Chen Y."/>
            <person name="Sprung R."/>
            <person name="Kim S.C."/>
            <person name="Xie S."/>
            <person name="Zhao Y."/>
        </authorList>
    </citation>
    <scope>PHOSPHORYLATION [LARGE SCALE ANALYSIS] AT SER-114</scope>
    <scope>IDENTIFICATION BY MASS SPECTROMETRY [LARGE SCALE ANALYSIS]</scope>
    <source>
        <tissue>Liver</tissue>
    </source>
</reference>
<reference key="7">
    <citation type="journal article" date="2007" name="Proc. Natl. Acad. Sci. U.S.A.">
        <title>Large-scale phosphorylation analysis of mouse liver.</title>
        <authorList>
            <person name="Villen J."/>
            <person name="Beausoleil S.A."/>
            <person name="Gerber S.A."/>
            <person name="Gygi S.P."/>
        </authorList>
    </citation>
    <scope>PHOSPHORYLATION [LARGE SCALE ANALYSIS] AT SER-114</scope>
    <scope>IDENTIFICATION BY MASS SPECTROMETRY [LARGE SCALE ANALYSIS]</scope>
    <source>
        <tissue>Liver</tissue>
    </source>
</reference>
<reference key="8">
    <citation type="journal article" date="2008" name="J. Proteome Res.">
        <title>Specific phosphopeptide enrichment with immobilized titanium ion affinity chromatography adsorbent for phosphoproteome analysis.</title>
        <authorList>
            <person name="Zhou H."/>
            <person name="Ye M."/>
            <person name="Dong J."/>
            <person name="Han G."/>
            <person name="Jiang X."/>
            <person name="Wu R."/>
            <person name="Zou H."/>
        </authorList>
    </citation>
    <scope>IDENTIFICATION BY MASS SPECTROMETRY [LARGE SCALE ANALYSIS]</scope>
    <source>
        <tissue>Liver</tissue>
    </source>
</reference>
<reference key="9">
    <citation type="journal article" date="2009" name="Immunity">
        <title>The phagosomal proteome in interferon-gamma-activated macrophages.</title>
        <authorList>
            <person name="Trost M."/>
            <person name="English L."/>
            <person name="Lemieux S."/>
            <person name="Courcelles M."/>
            <person name="Desjardins M."/>
            <person name="Thibault P."/>
        </authorList>
    </citation>
    <scope>PHOSPHORYLATION [LARGE SCALE ANALYSIS] AT SER-114</scope>
    <scope>IDENTIFICATION BY MASS SPECTROMETRY [LARGE SCALE ANALYSIS]</scope>
</reference>
<reference key="10">
    <citation type="journal article" date="2010" name="Cell">
        <title>A tissue-specific atlas of mouse protein phosphorylation and expression.</title>
        <authorList>
            <person name="Huttlin E.L."/>
            <person name="Jedrychowski M.P."/>
            <person name="Elias J.E."/>
            <person name="Goswami T."/>
            <person name="Rad R."/>
            <person name="Beausoleil S.A."/>
            <person name="Villen J."/>
            <person name="Haas W."/>
            <person name="Sowa M.E."/>
            <person name="Gygi S.P."/>
        </authorList>
    </citation>
    <scope>PHOSPHORYLATION [LARGE SCALE ANALYSIS] AT SER-114</scope>
    <scope>IDENTIFICATION BY MASS SPECTROMETRY [LARGE SCALE ANALYSIS]</scope>
    <source>
        <tissue>Brain</tissue>
        <tissue>Brown adipose tissue</tissue>
        <tissue>Heart</tissue>
        <tissue>Kidney</tissue>
        <tissue>Liver</tissue>
        <tissue>Lung</tissue>
        <tissue>Pancreas</tissue>
        <tissue>Spleen</tissue>
        <tissue>Testis</tissue>
    </source>
</reference>
<evidence type="ECO:0000250" key="1">
    <source>
        <dbReference type="UniProtKB" id="P40857"/>
    </source>
</evidence>
<evidence type="ECO:0000250" key="2">
    <source>
        <dbReference type="UniProtKB" id="Q9P035"/>
    </source>
</evidence>
<evidence type="ECO:0000255" key="3"/>
<evidence type="ECO:0000255" key="4">
    <source>
        <dbReference type="PROSITE-ProRule" id="PRU00547"/>
    </source>
</evidence>
<evidence type="ECO:0000303" key="5">
    <source>
    </source>
</evidence>
<evidence type="ECO:0000305" key="6"/>
<evidence type="ECO:0000312" key="7">
    <source>
        <dbReference type="MGI" id="MGI:1889341"/>
    </source>
</evidence>
<evidence type="ECO:0007744" key="8">
    <source>
    </source>
</evidence>
<evidence type="ECO:0007744" key="9">
    <source>
    </source>
</evidence>
<evidence type="ECO:0007744" key="10">
    <source>
    </source>
</evidence>
<evidence type="ECO:0007744" key="11">
    <source>
    </source>
</evidence>
<evidence type="ECO:0007744" key="12">
    <source>
    </source>
</evidence>
<name>HACD3_MOUSE</name>
<organism>
    <name type="scientific">Mus musculus</name>
    <name type="common">Mouse</name>
    <dbReference type="NCBI Taxonomy" id="10090"/>
    <lineage>
        <taxon>Eukaryota</taxon>
        <taxon>Metazoa</taxon>
        <taxon>Chordata</taxon>
        <taxon>Craniata</taxon>
        <taxon>Vertebrata</taxon>
        <taxon>Euteleostomi</taxon>
        <taxon>Mammalia</taxon>
        <taxon>Eutheria</taxon>
        <taxon>Euarchontoglires</taxon>
        <taxon>Glires</taxon>
        <taxon>Rodentia</taxon>
        <taxon>Myomorpha</taxon>
        <taxon>Muroidea</taxon>
        <taxon>Muridae</taxon>
        <taxon>Murinae</taxon>
        <taxon>Mus</taxon>
        <taxon>Mus</taxon>
    </lineage>
</organism>
<proteinExistence type="evidence at protein level"/>
<dbReference type="EC" id="4.2.1.134" evidence="2"/>
<dbReference type="EMBL" id="AK051735">
    <property type="protein sequence ID" value="BAC34744.1"/>
    <property type="molecule type" value="mRNA"/>
</dbReference>
<dbReference type="EMBL" id="AK052865">
    <property type="protein sequence ID" value="BAC35179.1"/>
    <property type="molecule type" value="mRNA"/>
</dbReference>
<dbReference type="EMBL" id="AK050556">
    <property type="protein sequence ID" value="BAE20677.1"/>
    <property type="molecule type" value="mRNA"/>
</dbReference>
<dbReference type="EMBL" id="AK159494">
    <property type="protein sequence ID" value="BAE35128.1"/>
    <property type="molecule type" value="mRNA"/>
</dbReference>
<dbReference type="EMBL" id="BC031755">
    <property type="protein sequence ID" value="AAH31755.1"/>
    <property type="molecule type" value="mRNA"/>
</dbReference>
<dbReference type="EMBL" id="BC057023">
    <property type="protein sequence ID" value="AAH57023.1"/>
    <property type="molecule type" value="mRNA"/>
</dbReference>
<dbReference type="EMBL" id="Z97207">
    <property type="protein sequence ID" value="CAB10097.2"/>
    <property type="molecule type" value="mRNA"/>
</dbReference>
<dbReference type="CCDS" id="CCDS23284.1"/>
<dbReference type="RefSeq" id="NP_067320.2">
    <property type="nucleotide sequence ID" value="NM_021345.2"/>
</dbReference>
<dbReference type="SMR" id="Q8K2C9"/>
<dbReference type="BioGRID" id="208344">
    <property type="interactions" value="21"/>
</dbReference>
<dbReference type="FunCoup" id="Q8K2C9">
    <property type="interactions" value="1633"/>
</dbReference>
<dbReference type="IntAct" id="Q8K2C9">
    <property type="interactions" value="90"/>
</dbReference>
<dbReference type="STRING" id="10090.ENSMUSP00000044955"/>
<dbReference type="GlyGen" id="Q8K2C9">
    <property type="glycosylation" value="2 sites, 1 N-linked glycan (1 site), 1 O-linked glycan (1 site)"/>
</dbReference>
<dbReference type="iPTMnet" id="Q8K2C9"/>
<dbReference type="PhosphoSitePlus" id="Q8K2C9"/>
<dbReference type="SwissPalm" id="Q8K2C9"/>
<dbReference type="jPOST" id="Q8K2C9"/>
<dbReference type="PaxDb" id="10090-ENSMUSP00000044955"/>
<dbReference type="PeptideAtlas" id="Q8K2C9"/>
<dbReference type="ProteomicsDB" id="270932"/>
<dbReference type="Pumba" id="Q8K2C9"/>
<dbReference type="Antibodypedia" id="7067">
    <property type="antibodies" value="111 antibodies from 18 providers"/>
</dbReference>
<dbReference type="DNASU" id="57874"/>
<dbReference type="Ensembl" id="ENSMUST00000036615.7">
    <property type="protein sequence ID" value="ENSMUSP00000044955.6"/>
    <property type="gene ID" value="ENSMUSG00000033629.7"/>
</dbReference>
<dbReference type="GeneID" id="57874"/>
<dbReference type="KEGG" id="mmu:57874"/>
<dbReference type="UCSC" id="uc009qcp.2">
    <property type="organism name" value="mouse"/>
</dbReference>
<dbReference type="AGR" id="MGI:1889341"/>
<dbReference type="CTD" id="51495"/>
<dbReference type="MGI" id="MGI:1889341">
    <property type="gene designation" value="Hacd3"/>
</dbReference>
<dbReference type="VEuPathDB" id="HostDB:ENSMUSG00000033629"/>
<dbReference type="eggNOG" id="KOG3187">
    <property type="taxonomic scope" value="Eukaryota"/>
</dbReference>
<dbReference type="GeneTree" id="ENSGT00530000062962"/>
<dbReference type="HOGENOM" id="CLU_046712_0_0_1"/>
<dbReference type="InParanoid" id="Q8K2C9"/>
<dbReference type="OMA" id="SYLVMSH"/>
<dbReference type="OrthoDB" id="2157530at2759"/>
<dbReference type="PhylomeDB" id="Q8K2C9"/>
<dbReference type="TreeFam" id="TF313326"/>
<dbReference type="Reactome" id="R-MMU-75876">
    <property type="pathway name" value="Synthesis of very long-chain fatty acyl-CoAs"/>
</dbReference>
<dbReference type="UniPathway" id="UPA00094"/>
<dbReference type="BioGRID-ORCS" id="57874">
    <property type="hits" value="4 hits in 76 CRISPR screens"/>
</dbReference>
<dbReference type="CD-CODE" id="CE726F99">
    <property type="entry name" value="Postsynaptic density"/>
</dbReference>
<dbReference type="ChiTaRS" id="Hacd3">
    <property type="organism name" value="mouse"/>
</dbReference>
<dbReference type="PRO" id="PR:Q8K2C9"/>
<dbReference type="Proteomes" id="UP000000589">
    <property type="component" value="Chromosome 9"/>
</dbReference>
<dbReference type="RNAct" id="Q8K2C9">
    <property type="molecule type" value="protein"/>
</dbReference>
<dbReference type="Bgee" id="ENSMUSG00000033629">
    <property type="expression patterns" value="Expressed in paneth cell and 260 other cell types or tissues"/>
</dbReference>
<dbReference type="GO" id="GO:0005783">
    <property type="term" value="C:endoplasmic reticulum"/>
    <property type="evidence" value="ECO:0000250"/>
    <property type="project" value="UniProtKB"/>
</dbReference>
<dbReference type="GO" id="GO:0005789">
    <property type="term" value="C:endoplasmic reticulum membrane"/>
    <property type="evidence" value="ECO:0007669"/>
    <property type="project" value="UniProtKB-SubCell"/>
</dbReference>
<dbReference type="GO" id="GO:0031965">
    <property type="term" value="C:nuclear membrane"/>
    <property type="evidence" value="ECO:0007669"/>
    <property type="project" value="Ensembl"/>
</dbReference>
<dbReference type="GO" id="GO:0019899">
    <property type="term" value="F:enzyme binding"/>
    <property type="evidence" value="ECO:0000250"/>
    <property type="project" value="UniProtKB"/>
</dbReference>
<dbReference type="GO" id="GO:0102158">
    <property type="term" value="F:very-long-chain (3R)-3-hydroxyacyl-CoA dehydratase activity"/>
    <property type="evidence" value="ECO:0000250"/>
    <property type="project" value="UniProtKB"/>
</dbReference>
<dbReference type="GO" id="GO:0030497">
    <property type="term" value="P:fatty acid elongation"/>
    <property type="evidence" value="ECO:0000250"/>
    <property type="project" value="UniProtKB"/>
</dbReference>
<dbReference type="GO" id="GO:0007254">
    <property type="term" value="P:JNK cascade"/>
    <property type="evidence" value="ECO:0000314"/>
    <property type="project" value="MGI"/>
</dbReference>
<dbReference type="GO" id="GO:1902532">
    <property type="term" value="P:negative regulation of intracellular signal transduction"/>
    <property type="evidence" value="ECO:0000314"/>
    <property type="project" value="MGI"/>
</dbReference>
<dbReference type="GO" id="GO:0046726">
    <property type="term" value="P:positive regulation by virus of viral protein levels in host cell"/>
    <property type="evidence" value="ECO:0007669"/>
    <property type="project" value="Ensembl"/>
</dbReference>
<dbReference type="GO" id="GO:0045070">
    <property type="term" value="P:positive regulation of viral genome replication"/>
    <property type="evidence" value="ECO:0007669"/>
    <property type="project" value="Ensembl"/>
</dbReference>
<dbReference type="GO" id="GO:0007266">
    <property type="term" value="P:Rho protein signal transduction"/>
    <property type="evidence" value="ECO:0000314"/>
    <property type="project" value="MGI"/>
</dbReference>
<dbReference type="GO" id="GO:0042761">
    <property type="term" value="P:very long-chain fatty acid biosynthetic process"/>
    <property type="evidence" value="ECO:0000250"/>
    <property type="project" value="UniProtKB"/>
</dbReference>
<dbReference type="CDD" id="cd06465">
    <property type="entry name" value="p23_hB-ind1_like"/>
    <property type="match status" value="1"/>
</dbReference>
<dbReference type="FunFam" id="2.60.40.790:FF:000048">
    <property type="entry name" value="Very-long-chain (3R)-3-hydroxyacyl-CoA dehydratase"/>
    <property type="match status" value="1"/>
</dbReference>
<dbReference type="Gene3D" id="2.60.40.790">
    <property type="match status" value="1"/>
</dbReference>
<dbReference type="InterPro" id="IPR007052">
    <property type="entry name" value="CS_dom"/>
</dbReference>
<dbReference type="InterPro" id="IPR008978">
    <property type="entry name" value="HSP20-like_chaperone"/>
</dbReference>
<dbReference type="InterPro" id="IPR007482">
    <property type="entry name" value="Tyr_Pase-like_PTPLA"/>
</dbReference>
<dbReference type="PANTHER" id="PTHR11035">
    <property type="entry name" value="VERY-LONG-CHAIN (3R)-3-HYDROXYACYL-COA DEHYDRATASE"/>
    <property type="match status" value="1"/>
</dbReference>
<dbReference type="PANTHER" id="PTHR11035:SF20">
    <property type="entry name" value="VERY-LONG-CHAIN (3R)-3-HYDROXYACYL-COA DEHYDRATASE 3"/>
    <property type="match status" value="1"/>
</dbReference>
<dbReference type="Pfam" id="PF04387">
    <property type="entry name" value="PTPLA"/>
    <property type="match status" value="1"/>
</dbReference>
<dbReference type="SUPFAM" id="SSF49764">
    <property type="entry name" value="HSP20-like chaperones"/>
    <property type="match status" value="1"/>
</dbReference>
<dbReference type="PROSITE" id="PS51203">
    <property type="entry name" value="CS"/>
    <property type="match status" value="1"/>
</dbReference>
<feature type="chain" id="PRO_0000313725" description="Very-long-chain (3R)-3-hydroxyacyl-CoA dehydratase 3">
    <location>
        <begin position="1"/>
        <end position="362"/>
    </location>
</feature>
<feature type="topological domain" description="Cytoplasmic" evidence="3">
    <location>
        <begin position="1"/>
        <end position="149"/>
    </location>
</feature>
<feature type="transmembrane region" description="Helical" evidence="3">
    <location>
        <begin position="150"/>
        <end position="170"/>
    </location>
</feature>
<feature type="topological domain" description="Lumenal" evidence="3">
    <location>
        <begin position="171"/>
        <end position="189"/>
    </location>
</feature>
<feature type="transmembrane region" description="Helical" evidence="3">
    <location>
        <begin position="190"/>
        <end position="210"/>
    </location>
</feature>
<feature type="topological domain" description="Cytoplasmic" evidence="3">
    <location>
        <begin position="211"/>
        <end position="212"/>
    </location>
</feature>
<feature type="transmembrane region" description="Helical" evidence="3">
    <location>
        <begin position="213"/>
        <end position="233"/>
    </location>
</feature>
<feature type="topological domain" description="Lumenal" evidence="3">
    <location>
        <begin position="234"/>
        <end position="242"/>
    </location>
</feature>
<feature type="transmembrane region" description="Helical" evidence="3">
    <location>
        <begin position="243"/>
        <end position="263"/>
    </location>
</feature>
<feature type="topological domain" description="Cytoplasmic" evidence="3">
    <location>
        <begin position="264"/>
        <end position="280"/>
    </location>
</feature>
<feature type="transmembrane region" description="Helical" evidence="3">
    <location>
        <begin position="281"/>
        <end position="301"/>
    </location>
</feature>
<feature type="topological domain" description="Lumenal" evidence="3">
    <location>
        <begin position="302"/>
        <end position="322"/>
    </location>
</feature>
<feature type="transmembrane region" description="Helical" evidence="3">
    <location>
        <begin position="323"/>
        <end position="343"/>
    </location>
</feature>
<feature type="topological domain" description="Cytoplasmic" evidence="3">
    <location>
        <begin position="344"/>
        <end position="362"/>
    </location>
</feature>
<feature type="domain" description="CS" evidence="4">
    <location>
        <begin position="5"/>
        <end position="94"/>
    </location>
</feature>
<feature type="coiled-coil region" evidence="3">
    <location>
        <begin position="111"/>
        <end position="138"/>
    </location>
</feature>
<feature type="active site" evidence="1">
    <location>
        <position position="286"/>
    </location>
</feature>
<feature type="active site" evidence="1">
    <location>
        <position position="293"/>
    </location>
</feature>
<feature type="modified residue" description="N-acetylmethionine" evidence="2">
    <location>
        <position position="1"/>
    </location>
</feature>
<feature type="modified residue" description="Phosphothreonine" evidence="2">
    <location>
        <position position="7"/>
    </location>
</feature>
<feature type="modified residue" description="Phosphoserine" evidence="8 9 10 11 12">
    <location>
        <position position="114"/>
    </location>
</feature>
<feature type="sequence conflict" description="In Ref. 2; AAH57023." evidence="6" ref="2">
    <original>A</original>
    <variation>P</variation>
    <location>
        <position position="32"/>
    </location>
</feature>
<feature type="sequence conflict" description="In Ref. 2; AAH31755." evidence="6" ref="2">
    <original>D</original>
    <variation>E</variation>
    <location>
        <position position="63"/>
    </location>
</feature>
<feature type="sequence conflict" description="In Ref. 3; CAB10097." evidence="6" ref="3">
    <original>K</original>
    <variation>R</variation>
    <location>
        <position position="146"/>
    </location>
</feature>
<comment type="function">
    <text evidence="2">Catalyzes the third of the four reactions of the long-chain fatty acids elongation cycle. This endoplasmic reticulum-bound enzymatic process, allows the addition of two carbons to the chain of long- and very long-chain fatty acids/VLCFAs per cycle. This enzyme catalyzes the dehydration of the 3-hydroxyacyl-CoA intermediate into trans-2,3-enoyl-CoA, within each cycle of fatty acid elongation. Thereby, it participates in the production of VLCFAs of different chain lengths that are involved in multiple biological processes as precursors of membrane lipids and lipid mediators. Involved in Rac1-signaling pathways leading to the modulation of gene expression. Promotes insulin receptor/INSR autophosphorylation and is involved in INSR internalization (By similarity).</text>
</comment>
<comment type="catalytic activity">
    <reaction evidence="2">
        <text>a very-long-chain (3R)-3-hydroxyacyl-CoA = a very-long-chain (2E)-enoyl-CoA + H2O</text>
        <dbReference type="Rhea" id="RHEA:45812"/>
        <dbReference type="ChEBI" id="CHEBI:15377"/>
        <dbReference type="ChEBI" id="CHEBI:83728"/>
        <dbReference type="ChEBI" id="CHEBI:85440"/>
        <dbReference type="EC" id="4.2.1.134"/>
    </reaction>
    <physiologicalReaction direction="left-to-right" evidence="2">
        <dbReference type="Rhea" id="RHEA:45813"/>
    </physiologicalReaction>
</comment>
<comment type="catalytic activity">
    <reaction evidence="2">
        <text>(3R)-hydroxyhexadecanoyl-CoA = (2E)-hexadecenoyl-CoA + H2O</text>
        <dbReference type="Rhea" id="RHEA:39159"/>
        <dbReference type="ChEBI" id="CHEBI:15377"/>
        <dbReference type="ChEBI" id="CHEBI:61526"/>
        <dbReference type="ChEBI" id="CHEBI:74278"/>
    </reaction>
    <physiologicalReaction direction="left-to-right" evidence="2">
        <dbReference type="Rhea" id="RHEA:39160"/>
    </physiologicalReaction>
</comment>
<comment type="pathway">
    <text evidence="2">Lipid metabolism; fatty acid biosynthesis.</text>
</comment>
<comment type="subunit">
    <text evidence="2">May interact with enzymes of the ELO family (including ELOVL1); with those enzymes that mediate condensation, the first of the four steps of the reaction cycle responsible for fatty acids elongation, may be part of a larger fatty acids elongase complex. Interacts with RAC1. Associates with internalized insulin receptor/INSR complexes on Golgi/endosomal membranes; HACD3/PTPLAD1 together with ATIC and PRKAA2/AMPK2 is proposed to be part of a signaling network regulating INSR autophosphorylation and endocytosis (By similarity).</text>
</comment>
<comment type="interaction">
    <interactant intactId="EBI-8329978">
        <id>Q8K2C9</id>
    </interactant>
    <interactant intactId="EBI-357648">
        <id>Q13200</id>
        <label>PSMD2</label>
    </interactant>
    <organismsDiffer>true</organismsDiffer>
    <experiments>2</experiments>
</comment>
<comment type="subcellular location">
    <subcellularLocation>
        <location evidence="2">Endoplasmic reticulum membrane</location>
        <topology evidence="2">Multi-pass membrane protein</topology>
    </subcellularLocation>
</comment>
<comment type="similarity">
    <text evidence="6">Belongs to the very long-chain fatty acids dehydratase HACD family.</text>
</comment>
<comment type="caution">
    <text evidence="2">Shares some similarity with tyrosine phosphatase proteins but it has probably no phosphatase activity.</text>
</comment>
<sequence length="362" mass="43131">METQVLTPHVYWAQRHRELYLRVELSDVQNPAISITDNVLHFKAQGHGAKGDNVYEFHLEFLDLVKPEPAYRLTQRQVNITVQKKGSHWWERLTKQEKRPLFLAPDFDRWLDESDAEMELRAKEEERLNKLRLEREGSPETLTNLKKGYLFMYNLVQLLGFSWIFVNLTVRFFILGKESFYDTFHNVADMMYFCQMLALVETLNAAIGVTSTPVLPALIQFLGRNFILFLVFGTMEEMQNKAVVFFVFYSWSAIEIFRYPFYMLSCIDMDWKVLTWLRYTMWIPLYPLGCLSEAVAVIQSIPVFNESGRFSFTLPYPVKMKVRFSFFLQVYLVMLFLGLYINFRHLYKQRRRRYGQKKKKLH</sequence>
<gene>
    <name evidence="7" type="primary">Hacd3</name>
    <name evidence="6" type="synonym">Ptplad1</name>
</gene>
<accession>Q8K2C9</accession>
<accession>O09003</accession>
<accession>Q6PGH3</accession>
<accession>Q8BGM8</accession>
<protein>
    <recommendedName>
        <fullName evidence="6">Very-long-chain (3R)-3-hydroxyacyl-CoA dehydratase 3</fullName>
        <ecNumber evidence="2">4.2.1.134</ecNumber>
    </recommendedName>
    <alternativeName>
        <fullName evidence="6">3-hydroxyacyl-CoA dehydratase 3</fullName>
        <shortName evidence="6">HACD3</shortName>
    </alternativeName>
    <alternativeName>
        <fullName evidence="5">Butyrate-induced protein 1</fullName>
        <shortName evidence="5">B-ind1</shortName>
    </alternativeName>
    <alternativeName>
        <fullName evidence="7">Protein-tyrosine phosphatase-like A domain-containing protein 1</fullName>
    </alternativeName>
</protein>